<comment type="function">
    <text evidence="3">Compactin diketide synthase; part of the gene cluster that mediates the biosynthesis of compactin, also known as mevastatin or ML-236B, and which acts as a potent competitive inhibitor of HMG-CoA reductase (PubMed:12172803). Compactin biosynthesis is performed in two stages (PubMed:12172803). The first stage is catalyzed by the nonaketide synthase mlcA, which belongs to type I polyketide synthases and catalyzes the iterative nine-step formation of the polyketide (PubMed:12172803). This PKS stage is completed by the action of dehydrogenase mlcG, which catalyzes the NADPH-dependent reduction of the unsaturated tetra-, penta- and heptaketide intermediates that arise during the mlcA-mediated biosynthesis of the nonaketide chain and leads to dihydro-ML-236C carboxylate (PubMed:12172803). Covalently bound dihydro-ML-236C carboxylate is released from mlcA by the mlcF esterase (PubMed:12172803). Conversion of dihydro-ML-236C carboxylate into ML-236A carboxylate is subsequently performed with the participation of molecular oxygen and P450 monoogygenase mlcC (PubMed:12172803). Finally, mlcH performs the conversion of ML-236A carboxylate to ML-236B/compactin carboxylate through the addition of the side-chain diketide moiety produced by the diketide synthase mlcB (PubMed:12172803).</text>
</comment>
<comment type="catalytic activity">
    <reaction evidence="6">
        <text>ML-236A carboxylate + (S)-2-methylbutanoyl-[2-methylbutanoate polyketide synthase] = mevinic carboxylate + holo-[2-methylbutanoate polyketide synthase]</text>
        <dbReference type="Rhea" id="RHEA:57636"/>
        <dbReference type="Rhea" id="RHEA-COMP:10260"/>
        <dbReference type="Rhea" id="RHEA-COMP:10261"/>
        <dbReference type="ChEBI" id="CHEBI:64479"/>
        <dbReference type="ChEBI" id="CHEBI:82764"/>
        <dbReference type="ChEBI" id="CHEBI:142048"/>
        <dbReference type="ChEBI" id="CHEBI:142050"/>
    </reaction>
</comment>
<comment type="pathway">
    <text evidence="5">Polyketide biosynthesis.</text>
</comment>
<comment type="induction">
    <text evidence="3 4">Expression is induced at the beginning of the stationary phase, which is consistent with the timing of compactin production (PubMed:12172803). Expression is controlled by the ML-236B/compactin cluster transcription regulator mlcR (PubMed:12436257).</text>
</comment>
<comment type="biotechnology">
    <text evidence="2">Compactin (also known as mevastatin or ML-236B) and the intermediary metabolites Ml-236C and ML-236A are inhibitors of HMG-CoA reductase involved in cholesterogenesis (PubMed:1010803). Their hypocholesterolemic activity might be useful for lowering cholesterol levels in the blood and reduce artherosclerosis and coronary heart disease (PubMed:1010803).</text>
</comment>
<comment type="similarity">
    <text evidence="6">Belongs to the class-A beta-lactamase family.</text>
</comment>
<proteinExistence type="evidence at protein level"/>
<keyword id="KW-0012">Acyltransferase</keyword>
<keyword id="KW-0378">Hydrolase</keyword>
<keyword id="KW-0808">Transferase</keyword>
<sequence>MAPSIDVIPTAASTAAGMISDMEAAFKSAVKLKQIPGAVVMARSMNGDIDYTRCFGARTVERDECQRLPPMEIDTPLRLASATKLLTTIMALQCMEQGLVDLDENVNRLLPDLSDMQVLTGFDAAGNAIMRDREGIIKLRHLLTHTSGLSYAFLHPLLQEYMAKGYLKTAEKFGIQSRLAPPAINDPGVEWIYGANLDWAGKLIERATGVDLEEFMQKNICEPLGITDMTFKLQQRPDMLARRSDQTRRNENGSLRYDDSVYFRHDGEECFGGQGVFCGPESYMKVLNSLMKHDGLLLKKDTIELMFQPALDAELEKKMNDHMDTTPHINYGAALPPVMRRNFGLGGIIAMGDLDGHNWRREGSLTFGGGPNIVWQIDPTVGLCTLVVFQLEPWNDPICKDLTRKFEKAMYSQVKCRN</sequence>
<feature type="chain" id="PRO_0000436288" description="ML-236A carboxylate methylbutanoyltransferase mlcH">
    <location>
        <begin position="1"/>
        <end position="418"/>
    </location>
</feature>
<feature type="active site" description="Acyl-ester intermediate" evidence="1">
    <location>
        <position position="81"/>
    </location>
</feature>
<feature type="binding site" evidence="1">
    <location>
        <position position="78"/>
    </location>
    <ligand>
        <name>monacolin J</name>
        <dbReference type="ChEBI" id="CHEBI:79034"/>
    </ligand>
</feature>
<feature type="binding site" evidence="1">
    <location>
        <position position="178"/>
    </location>
    <ligand>
        <name>monacolin J</name>
        <dbReference type="ChEBI" id="CHEBI:79034"/>
    </ligand>
</feature>
<feature type="binding site" evidence="1">
    <location>
        <position position="193"/>
    </location>
    <ligand>
        <name>monacolin J</name>
        <dbReference type="ChEBI" id="CHEBI:79034"/>
    </ligand>
</feature>
<feature type="binding site" evidence="1">
    <location>
        <position position="262"/>
    </location>
    <ligand>
        <name>monacolin J</name>
        <dbReference type="ChEBI" id="CHEBI:79034"/>
    </ligand>
</feature>
<feature type="binding site" evidence="1">
    <location>
        <position position="370"/>
    </location>
    <ligand>
        <name>2-methylbutanoate</name>
        <dbReference type="ChEBI" id="CHEBI:48946"/>
    </ligand>
</feature>
<accession>Q8J0G0</accession>
<name>MLCH_PENCI</name>
<reference key="1">
    <citation type="journal article" date="2002" name="Mol. Genet. Genomics">
        <title>Molecular cloning and characterization of an ML-236B (compactin) biosynthetic gene cluster in Penicillium citrinum.</title>
        <authorList>
            <person name="Abe Y."/>
            <person name="Suzuki T."/>
            <person name="Ono C."/>
            <person name="Iwamoto K."/>
            <person name="Hosobuchi M."/>
            <person name="Yoshikawa H."/>
        </authorList>
    </citation>
    <scope>NUCLEOTIDE SEQUENCE [GENOMIC DNA]</scope>
    <scope>INDUCTION</scope>
</reference>
<reference key="2">
    <citation type="journal article" date="1976" name="J. Antibiot.">
        <title>ML-236A, ML-236B, and ML-236C, new inhibitors of cholesterogenesis produced by Penicillium citrinium.</title>
        <authorList>
            <person name="Endo A."/>
            <person name="Kuroda M."/>
            <person name="Tsujita Y."/>
        </authorList>
    </citation>
    <scope>BIOTECHNOLOGY</scope>
</reference>
<reference key="3">
    <citation type="journal article" date="2002" name="Mol. Genet. Genomics">
        <title>Functional analysis of mlcR, a regulatory gene for ML-236B (compactin) biosynthesis in Penicillium citrinum.</title>
        <authorList>
            <person name="Abe Y."/>
            <person name="Ono C."/>
            <person name="Hosobuchi M."/>
            <person name="Yoshikawa H."/>
        </authorList>
    </citation>
    <scope>INDUCTION</scope>
</reference>
<evidence type="ECO:0000250" key="1">
    <source>
        <dbReference type="UniProtKB" id="Q9Y7D1"/>
    </source>
</evidence>
<evidence type="ECO:0000269" key="2">
    <source>
    </source>
</evidence>
<evidence type="ECO:0000269" key="3">
    <source>
    </source>
</evidence>
<evidence type="ECO:0000269" key="4">
    <source>
    </source>
</evidence>
<evidence type="ECO:0000303" key="5">
    <source>
    </source>
</evidence>
<evidence type="ECO:0000305" key="6"/>
<organism>
    <name type="scientific">Penicillium citrinum</name>
    <dbReference type="NCBI Taxonomy" id="5077"/>
    <lineage>
        <taxon>Eukaryota</taxon>
        <taxon>Fungi</taxon>
        <taxon>Dikarya</taxon>
        <taxon>Ascomycota</taxon>
        <taxon>Pezizomycotina</taxon>
        <taxon>Eurotiomycetes</taxon>
        <taxon>Eurotiomycetidae</taxon>
        <taxon>Eurotiales</taxon>
        <taxon>Aspergillaceae</taxon>
        <taxon>Penicillium</taxon>
    </lineage>
</organism>
<dbReference type="EC" id="2.3.1.-" evidence="6"/>
<dbReference type="EMBL" id="AB072893">
    <property type="protein sequence ID" value="BAC20561.1"/>
    <property type="molecule type" value="Genomic_DNA"/>
</dbReference>
<dbReference type="SMR" id="Q8J0G0"/>
<dbReference type="GO" id="GO:0016746">
    <property type="term" value="F:acyltransferase activity"/>
    <property type="evidence" value="ECO:0007669"/>
    <property type="project" value="UniProtKB-KW"/>
</dbReference>
<dbReference type="GO" id="GO:0016787">
    <property type="term" value="F:hydrolase activity"/>
    <property type="evidence" value="ECO:0007669"/>
    <property type="project" value="UniProtKB-KW"/>
</dbReference>
<dbReference type="Gene3D" id="3.40.710.10">
    <property type="entry name" value="DD-peptidase/beta-lactamase superfamily"/>
    <property type="match status" value="1"/>
</dbReference>
<dbReference type="InterPro" id="IPR001466">
    <property type="entry name" value="Beta-lactam-related"/>
</dbReference>
<dbReference type="InterPro" id="IPR012338">
    <property type="entry name" value="Beta-lactam/transpept-like"/>
</dbReference>
<dbReference type="InterPro" id="IPR050789">
    <property type="entry name" value="Diverse_Enzym_Activities"/>
</dbReference>
<dbReference type="PANTHER" id="PTHR43283:SF17">
    <property type="entry name" value="(LOVD), PUTATIVE (AFU_ORTHOLOGUE AFUA_5G00920)-RELATED"/>
    <property type="match status" value="1"/>
</dbReference>
<dbReference type="PANTHER" id="PTHR43283">
    <property type="entry name" value="BETA-LACTAMASE-RELATED"/>
    <property type="match status" value="1"/>
</dbReference>
<dbReference type="Pfam" id="PF00144">
    <property type="entry name" value="Beta-lactamase"/>
    <property type="match status" value="1"/>
</dbReference>
<dbReference type="SUPFAM" id="SSF56601">
    <property type="entry name" value="beta-lactamase/transpeptidase-like"/>
    <property type="match status" value="1"/>
</dbReference>
<gene>
    <name evidence="5" type="primary">mlcH</name>
</gene>
<protein>
    <recommendedName>
        <fullName evidence="6">ML-236A carboxylate methylbutanoyltransferase mlcH</fullName>
        <ecNumber evidence="6">2.3.1.-</ecNumber>
    </recommendedName>
    <alternativeName>
        <fullName evidence="5">Compactin biosynthesis protein H</fullName>
    </alternativeName>
</protein>